<evidence type="ECO:0000255" key="1">
    <source>
        <dbReference type="HAMAP-Rule" id="MF_01201"/>
    </source>
</evidence>
<keyword id="KW-0413">Isomerase</keyword>
<keyword id="KW-0663">Pyridoxal phosphate</keyword>
<name>ALR_THEFY</name>
<reference key="1">
    <citation type="journal article" date="2007" name="J. Bacteriol.">
        <title>Genome sequence and analysis of the soil cellulolytic actinomycete Thermobifida fusca YX.</title>
        <authorList>
            <person name="Lykidis A."/>
            <person name="Mavromatis K."/>
            <person name="Ivanova N."/>
            <person name="Anderson I."/>
            <person name="Land M."/>
            <person name="DiBartolo G."/>
            <person name="Martinez M."/>
            <person name="Lapidus A."/>
            <person name="Lucas S."/>
            <person name="Copeland A."/>
            <person name="Richardson P."/>
            <person name="Wilson D.B."/>
            <person name="Kyrpides N."/>
        </authorList>
    </citation>
    <scope>NUCLEOTIDE SEQUENCE [LARGE SCALE GENOMIC DNA]</scope>
    <source>
        <strain>YX</strain>
    </source>
</reference>
<accession>Q47LN3</accession>
<dbReference type="EC" id="5.1.1.1" evidence="1"/>
<dbReference type="EMBL" id="CP000088">
    <property type="protein sequence ID" value="AAZ56639.1"/>
    <property type="molecule type" value="Genomic_DNA"/>
</dbReference>
<dbReference type="RefSeq" id="WP_011293029.1">
    <property type="nucleotide sequence ID" value="NC_007333.1"/>
</dbReference>
<dbReference type="SMR" id="Q47LN3"/>
<dbReference type="STRING" id="269800.Tfu_2606"/>
<dbReference type="KEGG" id="tfu:Tfu_2606"/>
<dbReference type="eggNOG" id="COG0787">
    <property type="taxonomic scope" value="Bacteria"/>
</dbReference>
<dbReference type="HOGENOM" id="CLU_028393_0_0_11"/>
<dbReference type="OrthoDB" id="9813814at2"/>
<dbReference type="UniPathway" id="UPA00042">
    <property type="reaction ID" value="UER00497"/>
</dbReference>
<dbReference type="GO" id="GO:0005829">
    <property type="term" value="C:cytosol"/>
    <property type="evidence" value="ECO:0007669"/>
    <property type="project" value="TreeGrafter"/>
</dbReference>
<dbReference type="GO" id="GO:0008784">
    <property type="term" value="F:alanine racemase activity"/>
    <property type="evidence" value="ECO:0007669"/>
    <property type="project" value="UniProtKB-UniRule"/>
</dbReference>
<dbReference type="GO" id="GO:0030170">
    <property type="term" value="F:pyridoxal phosphate binding"/>
    <property type="evidence" value="ECO:0007669"/>
    <property type="project" value="UniProtKB-UniRule"/>
</dbReference>
<dbReference type="GO" id="GO:0030632">
    <property type="term" value="P:D-alanine biosynthetic process"/>
    <property type="evidence" value="ECO:0007669"/>
    <property type="project" value="UniProtKB-UniRule"/>
</dbReference>
<dbReference type="GO" id="GO:0009252">
    <property type="term" value="P:peptidoglycan biosynthetic process"/>
    <property type="evidence" value="ECO:0007669"/>
    <property type="project" value="TreeGrafter"/>
</dbReference>
<dbReference type="CDD" id="cd00430">
    <property type="entry name" value="PLPDE_III_AR"/>
    <property type="match status" value="1"/>
</dbReference>
<dbReference type="FunFam" id="2.40.37.10:FF:000015">
    <property type="entry name" value="Alanine racemase"/>
    <property type="match status" value="1"/>
</dbReference>
<dbReference type="FunFam" id="3.20.20.10:FF:000002">
    <property type="entry name" value="Alanine racemase"/>
    <property type="match status" value="1"/>
</dbReference>
<dbReference type="Gene3D" id="3.20.20.10">
    <property type="entry name" value="Alanine racemase"/>
    <property type="match status" value="1"/>
</dbReference>
<dbReference type="Gene3D" id="2.40.37.10">
    <property type="entry name" value="Lyase, Ornithine Decarboxylase, Chain A, domain 1"/>
    <property type="match status" value="1"/>
</dbReference>
<dbReference type="HAMAP" id="MF_01201">
    <property type="entry name" value="Ala_racemase"/>
    <property type="match status" value="1"/>
</dbReference>
<dbReference type="InterPro" id="IPR000821">
    <property type="entry name" value="Ala_racemase"/>
</dbReference>
<dbReference type="InterPro" id="IPR009006">
    <property type="entry name" value="Ala_racemase/Decarboxylase_C"/>
</dbReference>
<dbReference type="InterPro" id="IPR011079">
    <property type="entry name" value="Ala_racemase_C"/>
</dbReference>
<dbReference type="InterPro" id="IPR001608">
    <property type="entry name" value="Ala_racemase_N"/>
</dbReference>
<dbReference type="InterPro" id="IPR020622">
    <property type="entry name" value="Ala_racemase_pyridoxalP-BS"/>
</dbReference>
<dbReference type="InterPro" id="IPR029066">
    <property type="entry name" value="PLP-binding_barrel"/>
</dbReference>
<dbReference type="NCBIfam" id="TIGR00492">
    <property type="entry name" value="alr"/>
    <property type="match status" value="1"/>
</dbReference>
<dbReference type="PANTHER" id="PTHR30511">
    <property type="entry name" value="ALANINE RACEMASE"/>
    <property type="match status" value="1"/>
</dbReference>
<dbReference type="PANTHER" id="PTHR30511:SF0">
    <property type="entry name" value="ALANINE RACEMASE, CATABOLIC-RELATED"/>
    <property type="match status" value="1"/>
</dbReference>
<dbReference type="Pfam" id="PF00842">
    <property type="entry name" value="Ala_racemase_C"/>
    <property type="match status" value="1"/>
</dbReference>
<dbReference type="Pfam" id="PF01168">
    <property type="entry name" value="Ala_racemase_N"/>
    <property type="match status" value="1"/>
</dbReference>
<dbReference type="PRINTS" id="PR00992">
    <property type="entry name" value="ALARACEMASE"/>
</dbReference>
<dbReference type="SMART" id="SM01005">
    <property type="entry name" value="Ala_racemase_C"/>
    <property type="match status" value="1"/>
</dbReference>
<dbReference type="SUPFAM" id="SSF50621">
    <property type="entry name" value="Alanine racemase C-terminal domain-like"/>
    <property type="match status" value="1"/>
</dbReference>
<dbReference type="SUPFAM" id="SSF51419">
    <property type="entry name" value="PLP-binding barrel"/>
    <property type="match status" value="1"/>
</dbReference>
<dbReference type="PROSITE" id="PS00395">
    <property type="entry name" value="ALANINE_RACEMASE"/>
    <property type="match status" value="1"/>
</dbReference>
<feature type="chain" id="PRO_1000138630" description="Alanine racemase">
    <location>
        <begin position="1"/>
        <end position="374"/>
    </location>
</feature>
<feature type="active site" description="Proton acceptor; specific for D-alanine" evidence="1">
    <location>
        <position position="35"/>
    </location>
</feature>
<feature type="active site" description="Proton acceptor; specific for L-alanine" evidence="1">
    <location>
        <position position="264"/>
    </location>
</feature>
<feature type="binding site" evidence="1">
    <location>
        <position position="133"/>
    </location>
    <ligand>
        <name>substrate</name>
    </ligand>
</feature>
<feature type="binding site" evidence="1">
    <location>
        <position position="312"/>
    </location>
    <ligand>
        <name>substrate</name>
    </ligand>
</feature>
<feature type="modified residue" description="N6-(pyridoxal phosphate)lysine" evidence="1">
    <location>
        <position position="35"/>
    </location>
</feature>
<sequence length="374" mass="38985">MSSFAEARIDLDAISGNIALLAERAAGAQVMGVVKADGYGHGMVPAARAALAGGATWLGTAFIAEALQLRAAGIDAPILAWLVPPGEPLTEAIDAGIDLGIGSMWVINEVIDAARQARRQARIHLKVDTGLNRGGIGPADWSAAAAALARAEAAGLLTVTGVFSHLACADEPDNPATTAQLEAFHQALSVVDKAGLHPQVRHIANSAALLTRPDARFDLVRPGIATYGLSPIPGLDVPGLRPAMTLSATLVGCKRVRPGSGVSYGYRYVTDRETNLALVPLGYGDGVPRAATNRAPVFVAGRRRTIAGTVCMDQFVVDIGDDTVTPGDRAILFGPGDHGEPTAQDWADALDTISYEIVTRIGRRVPRVYTGAVR</sequence>
<proteinExistence type="inferred from homology"/>
<comment type="function">
    <text evidence="1">Catalyzes the interconversion of L-alanine and D-alanine. May also act on other amino acids.</text>
</comment>
<comment type="catalytic activity">
    <reaction evidence="1">
        <text>L-alanine = D-alanine</text>
        <dbReference type="Rhea" id="RHEA:20249"/>
        <dbReference type="ChEBI" id="CHEBI:57416"/>
        <dbReference type="ChEBI" id="CHEBI:57972"/>
        <dbReference type="EC" id="5.1.1.1"/>
    </reaction>
</comment>
<comment type="cofactor">
    <cofactor evidence="1">
        <name>pyridoxal 5'-phosphate</name>
        <dbReference type="ChEBI" id="CHEBI:597326"/>
    </cofactor>
</comment>
<comment type="pathway">
    <text evidence="1">Amino-acid biosynthesis; D-alanine biosynthesis; D-alanine from L-alanine: step 1/1.</text>
</comment>
<comment type="similarity">
    <text evidence="1">Belongs to the alanine racemase family.</text>
</comment>
<organism>
    <name type="scientific">Thermobifida fusca (strain YX)</name>
    <dbReference type="NCBI Taxonomy" id="269800"/>
    <lineage>
        <taxon>Bacteria</taxon>
        <taxon>Bacillati</taxon>
        <taxon>Actinomycetota</taxon>
        <taxon>Actinomycetes</taxon>
        <taxon>Streptosporangiales</taxon>
        <taxon>Nocardiopsidaceae</taxon>
        <taxon>Thermobifida</taxon>
    </lineage>
</organism>
<gene>
    <name type="primary">alr</name>
    <name type="ordered locus">Tfu_2606</name>
</gene>
<protein>
    <recommendedName>
        <fullName evidence="1">Alanine racemase</fullName>
        <ecNumber evidence="1">5.1.1.1</ecNumber>
    </recommendedName>
</protein>